<proteinExistence type="inferred from homology"/>
<sequence length="73" mass="8125">LQMLHAWTNSALVHYAAPDWRETGGRLLGEGALRELRDGRRAASSSWPGRGSSRRWRPGRRTGAAARGCWRAP</sequence>
<gene>
    <name type="primary">pepG</name>
</gene>
<feature type="chain" id="PRO_0000095077" description="Aminopeptidase G">
    <location>
        <begin position="1" status="less than"/>
        <end position="73" status="greater than"/>
    </location>
</feature>
<feature type="region of interest" description="Disordered" evidence="2">
    <location>
        <begin position="39"/>
        <end position="73"/>
    </location>
</feature>
<feature type="compositionally biased region" description="Low complexity" evidence="2">
    <location>
        <begin position="42"/>
        <end position="51"/>
    </location>
</feature>
<feature type="compositionally biased region" description="Low complexity" evidence="2">
    <location>
        <begin position="61"/>
        <end position="73"/>
    </location>
</feature>
<feature type="non-terminal residue">
    <location>
        <position position="1"/>
    </location>
</feature>
<feature type="non-terminal residue">
    <location>
        <position position="73"/>
    </location>
</feature>
<reference key="1">
    <citation type="journal article" date="1994" name="J. Ind. Microbiol.">
        <title>Intracellular aminopeptidases in Streptomyces lividans 66.</title>
        <authorList>
            <person name="Butler M.J."/>
            <person name="Aphale J.S."/>
            <person name="Dizonno M.A."/>
            <person name="Krygsman P."/>
            <person name="Walczyk E."/>
            <person name="Malek L.T."/>
        </authorList>
    </citation>
    <scope>NUCLEOTIDE SEQUENCE [GENOMIC DNA]</scope>
    <source>
        <strain>66 / 1326</strain>
    </source>
</reference>
<comment type="function">
    <text>Hydrolyzes preferentially the N-terminal glycine and can also hydrolyze other amino acids which are used by PepN but is unable to hydrolyze basic amino acids.</text>
</comment>
<comment type="cofactor">
    <cofactor evidence="1">
        <name>Zn(2+)</name>
        <dbReference type="ChEBI" id="CHEBI:29105"/>
    </cofactor>
    <text evidence="1">Binds 1 zinc ion per subunit.</text>
</comment>
<comment type="subcellular location">
    <subcellularLocation>
        <location>Cytoplasm</location>
    </subcellularLocation>
</comment>
<comment type="similarity">
    <text evidence="3">Belongs to the peptidase M1 family.</text>
</comment>
<protein>
    <recommendedName>
        <fullName>Aminopeptidase G</fullName>
        <ecNumber>3.4.11.-</ecNumber>
    </recommendedName>
</protein>
<keyword id="KW-0031">Aminopeptidase</keyword>
<keyword id="KW-0963">Cytoplasm</keyword>
<keyword id="KW-0378">Hydrolase</keyword>
<keyword id="KW-0482">Metalloprotease</keyword>
<keyword id="KW-0645">Protease</keyword>
<keyword id="KW-0862">Zinc</keyword>
<name>AMPG_STRLI</name>
<accession>Q54340</accession>
<dbReference type="EC" id="3.4.11.-"/>
<dbReference type="EMBL" id="L23173">
    <property type="protein sequence ID" value="AAA26695.1"/>
    <property type="molecule type" value="Genomic_DNA"/>
</dbReference>
<dbReference type="MEROPS" id="M01.012"/>
<dbReference type="GO" id="GO:0005737">
    <property type="term" value="C:cytoplasm"/>
    <property type="evidence" value="ECO:0007669"/>
    <property type="project" value="UniProtKB-SubCell"/>
</dbReference>
<dbReference type="GO" id="GO:0004177">
    <property type="term" value="F:aminopeptidase activity"/>
    <property type="evidence" value="ECO:0007669"/>
    <property type="project" value="UniProtKB-KW"/>
</dbReference>
<dbReference type="GO" id="GO:0008237">
    <property type="term" value="F:metallopeptidase activity"/>
    <property type="evidence" value="ECO:0007669"/>
    <property type="project" value="UniProtKB-KW"/>
</dbReference>
<dbReference type="GO" id="GO:0006508">
    <property type="term" value="P:proteolysis"/>
    <property type="evidence" value="ECO:0007669"/>
    <property type="project" value="UniProtKB-KW"/>
</dbReference>
<organism>
    <name type="scientific">Streptomyces lividans</name>
    <dbReference type="NCBI Taxonomy" id="1916"/>
    <lineage>
        <taxon>Bacteria</taxon>
        <taxon>Bacillati</taxon>
        <taxon>Actinomycetota</taxon>
        <taxon>Actinomycetes</taxon>
        <taxon>Kitasatosporales</taxon>
        <taxon>Streptomycetaceae</taxon>
        <taxon>Streptomyces</taxon>
    </lineage>
</organism>
<evidence type="ECO:0000250" key="1"/>
<evidence type="ECO:0000256" key="2">
    <source>
        <dbReference type="SAM" id="MobiDB-lite"/>
    </source>
</evidence>
<evidence type="ECO:0000305" key="3"/>